<accession>B0C132</accession>
<evidence type="ECO:0000255" key="1">
    <source>
        <dbReference type="HAMAP-Rule" id="MF_01554"/>
    </source>
</evidence>
<feature type="chain" id="PRO_0000343583" description="Phosphoglucosamine mutase">
    <location>
        <begin position="1"/>
        <end position="455"/>
    </location>
</feature>
<feature type="active site" description="Phosphoserine intermediate" evidence="1">
    <location>
        <position position="106"/>
    </location>
</feature>
<feature type="binding site" description="via phosphate group" evidence="1">
    <location>
        <position position="106"/>
    </location>
    <ligand>
        <name>Mg(2+)</name>
        <dbReference type="ChEBI" id="CHEBI:18420"/>
    </ligand>
</feature>
<feature type="binding site" evidence="1">
    <location>
        <position position="245"/>
    </location>
    <ligand>
        <name>Mg(2+)</name>
        <dbReference type="ChEBI" id="CHEBI:18420"/>
    </ligand>
</feature>
<feature type="binding site" evidence="1">
    <location>
        <position position="247"/>
    </location>
    <ligand>
        <name>Mg(2+)</name>
        <dbReference type="ChEBI" id="CHEBI:18420"/>
    </ligand>
</feature>
<feature type="binding site" evidence="1">
    <location>
        <position position="249"/>
    </location>
    <ligand>
        <name>Mg(2+)</name>
        <dbReference type="ChEBI" id="CHEBI:18420"/>
    </ligand>
</feature>
<feature type="modified residue" description="Phosphoserine" evidence="1">
    <location>
        <position position="106"/>
    </location>
</feature>
<dbReference type="EC" id="5.4.2.10" evidence="1"/>
<dbReference type="EMBL" id="CP000828">
    <property type="protein sequence ID" value="ABW28430.1"/>
    <property type="molecule type" value="Genomic_DNA"/>
</dbReference>
<dbReference type="SMR" id="B0C132"/>
<dbReference type="STRING" id="329726.AM1_3435"/>
<dbReference type="KEGG" id="amr:AM1_3435"/>
<dbReference type="eggNOG" id="COG1109">
    <property type="taxonomic scope" value="Bacteria"/>
</dbReference>
<dbReference type="HOGENOM" id="CLU_016950_7_0_3"/>
<dbReference type="Proteomes" id="UP000000268">
    <property type="component" value="Chromosome"/>
</dbReference>
<dbReference type="GO" id="GO:0005829">
    <property type="term" value="C:cytosol"/>
    <property type="evidence" value="ECO:0007669"/>
    <property type="project" value="TreeGrafter"/>
</dbReference>
<dbReference type="GO" id="GO:0000287">
    <property type="term" value="F:magnesium ion binding"/>
    <property type="evidence" value="ECO:0007669"/>
    <property type="project" value="UniProtKB-UniRule"/>
</dbReference>
<dbReference type="GO" id="GO:0008966">
    <property type="term" value="F:phosphoglucosamine mutase activity"/>
    <property type="evidence" value="ECO:0007669"/>
    <property type="project" value="UniProtKB-UniRule"/>
</dbReference>
<dbReference type="GO" id="GO:0004615">
    <property type="term" value="F:phosphomannomutase activity"/>
    <property type="evidence" value="ECO:0007669"/>
    <property type="project" value="TreeGrafter"/>
</dbReference>
<dbReference type="GO" id="GO:0005975">
    <property type="term" value="P:carbohydrate metabolic process"/>
    <property type="evidence" value="ECO:0007669"/>
    <property type="project" value="InterPro"/>
</dbReference>
<dbReference type="GO" id="GO:0009252">
    <property type="term" value="P:peptidoglycan biosynthetic process"/>
    <property type="evidence" value="ECO:0007669"/>
    <property type="project" value="TreeGrafter"/>
</dbReference>
<dbReference type="GO" id="GO:0006048">
    <property type="term" value="P:UDP-N-acetylglucosamine biosynthetic process"/>
    <property type="evidence" value="ECO:0007669"/>
    <property type="project" value="TreeGrafter"/>
</dbReference>
<dbReference type="CDD" id="cd05802">
    <property type="entry name" value="GlmM"/>
    <property type="match status" value="1"/>
</dbReference>
<dbReference type="FunFam" id="3.30.310.50:FF:000001">
    <property type="entry name" value="Phosphoglucosamine mutase"/>
    <property type="match status" value="1"/>
</dbReference>
<dbReference type="FunFam" id="3.40.120.10:FF:000001">
    <property type="entry name" value="Phosphoglucosamine mutase"/>
    <property type="match status" value="1"/>
</dbReference>
<dbReference type="FunFam" id="3.40.120.10:FF:000002">
    <property type="entry name" value="Phosphoglucosamine mutase"/>
    <property type="match status" value="1"/>
</dbReference>
<dbReference type="Gene3D" id="3.40.120.10">
    <property type="entry name" value="Alpha-D-Glucose-1,6-Bisphosphate, subunit A, domain 3"/>
    <property type="match status" value="3"/>
</dbReference>
<dbReference type="Gene3D" id="3.30.310.50">
    <property type="entry name" value="Alpha-D-phosphohexomutase, C-terminal domain"/>
    <property type="match status" value="1"/>
</dbReference>
<dbReference type="HAMAP" id="MF_01554_B">
    <property type="entry name" value="GlmM_B"/>
    <property type="match status" value="1"/>
</dbReference>
<dbReference type="InterPro" id="IPR005844">
    <property type="entry name" value="A-D-PHexomutase_a/b/a-I"/>
</dbReference>
<dbReference type="InterPro" id="IPR016055">
    <property type="entry name" value="A-D-PHexomutase_a/b/a-I/II/III"/>
</dbReference>
<dbReference type="InterPro" id="IPR005845">
    <property type="entry name" value="A-D-PHexomutase_a/b/a-II"/>
</dbReference>
<dbReference type="InterPro" id="IPR005846">
    <property type="entry name" value="A-D-PHexomutase_a/b/a-III"/>
</dbReference>
<dbReference type="InterPro" id="IPR005843">
    <property type="entry name" value="A-D-PHexomutase_C"/>
</dbReference>
<dbReference type="InterPro" id="IPR036900">
    <property type="entry name" value="A-D-PHexomutase_C_sf"/>
</dbReference>
<dbReference type="InterPro" id="IPR016066">
    <property type="entry name" value="A-D-PHexomutase_CS"/>
</dbReference>
<dbReference type="InterPro" id="IPR005841">
    <property type="entry name" value="Alpha-D-phosphohexomutase_SF"/>
</dbReference>
<dbReference type="InterPro" id="IPR006352">
    <property type="entry name" value="GlmM_bact"/>
</dbReference>
<dbReference type="InterPro" id="IPR050060">
    <property type="entry name" value="Phosphoglucosamine_mutase"/>
</dbReference>
<dbReference type="NCBIfam" id="TIGR01455">
    <property type="entry name" value="glmM"/>
    <property type="match status" value="1"/>
</dbReference>
<dbReference type="PANTHER" id="PTHR42946:SF1">
    <property type="entry name" value="PHOSPHOGLUCOMUTASE (ALPHA-D-GLUCOSE-1,6-BISPHOSPHATE-DEPENDENT)"/>
    <property type="match status" value="1"/>
</dbReference>
<dbReference type="PANTHER" id="PTHR42946">
    <property type="entry name" value="PHOSPHOHEXOSE MUTASE"/>
    <property type="match status" value="1"/>
</dbReference>
<dbReference type="Pfam" id="PF02878">
    <property type="entry name" value="PGM_PMM_I"/>
    <property type="match status" value="1"/>
</dbReference>
<dbReference type="Pfam" id="PF02879">
    <property type="entry name" value="PGM_PMM_II"/>
    <property type="match status" value="1"/>
</dbReference>
<dbReference type="Pfam" id="PF02880">
    <property type="entry name" value="PGM_PMM_III"/>
    <property type="match status" value="1"/>
</dbReference>
<dbReference type="Pfam" id="PF00408">
    <property type="entry name" value="PGM_PMM_IV"/>
    <property type="match status" value="1"/>
</dbReference>
<dbReference type="PRINTS" id="PR00509">
    <property type="entry name" value="PGMPMM"/>
</dbReference>
<dbReference type="SUPFAM" id="SSF55957">
    <property type="entry name" value="Phosphoglucomutase, C-terminal domain"/>
    <property type="match status" value="1"/>
</dbReference>
<dbReference type="SUPFAM" id="SSF53738">
    <property type="entry name" value="Phosphoglucomutase, first 3 domains"/>
    <property type="match status" value="3"/>
</dbReference>
<dbReference type="PROSITE" id="PS00710">
    <property type="entry name" value="PGM_PMM"/>
    <property type="match status" value="1"/>
</dbReference>
<comment type="function">
    <text evidence="1">Catalyzes the conversion of glucosamine-6-phosphate to glucosamine-1-phosphate.</text>
</comment>
<comment type="catalytic activity">
    <reaction evidence="1">
        <text>alpha-D-glucosamine 1-phosphate = D-glucosamine 6-phosphate</text>
        <dbReference type="Rhea" id="RHEA:23424"/>
        <dbReference type="ChEBI" id="CHEBI:58516"/>
        <dbReference type="ChEBI" id="CHEBI:58725"/>
        <dbReference type="EC" id="5.4.2.10"/>
    </reaction>
</comment>
<comment type="cofactor">
    <cofactor evidence="1">
        <name>Mg(2+)</name>
        <dbReference type="ChEBI" id="CHEBI:18420"/>
    </cofactor>
    <text evidence="1">Binds 1 Mg(2+) ion per subunit.</text>
</comment>
<comment type="PTM">
    <text evidence="1">Activated by phosphorylation.</text>
</comment>
<comment type="similarity">
    <text evidence="1">Belongs to the phosphohexose mutase family.</text>
</comment>
<sequence length="455" mass="49461">MAAAKDVNLFGTDGIRGHVGQHLTPQLALQVGFCAGLELGQDASPHQPFILGQDSRNSSDMLAMALSAGLTAAGLDVWHIGLCPTPTVAYLTHHTEAVGGVMVSASHNPPADNGIKFFQANGTKLPPTTQGKIEQRIRAYSQQQPSGTWGHHFHRPELTKSYTDAIQTPLHAQVDFQGLKVVLDLAWGAATQLAPAVFKAMGAEVICLHDQPDGDRINVNCGSTHLAPLKAAVNLHEADVGFAFDGDADRVLAIDCQGRTVDGDYILYLWGKALQQQNQLPKDLIVATVMSNLGFELAWQQQGGTLLRAAVGDQNVHAEMLNHGSMLGGEQSGHILCPHYGVSGDGLLTALHLATIICQNKTRLSCLVDDSFQTYPQLLKNVRVEDRDRRRNWQECQPLQTLIDQATDDMGDQGRILVRASGTEPLIRVMVEARDMRMVNHWTDQLVRAVETHLA</sequence>
<keyword id="KW-0413">Isomerase</keyword>
<keyword id="KW-0460">Magnesium</keyword>
<keyword id="KW-0479">Metal-binding</keyword>
<keyword id="KW-0597">Phosphoprotein</keyword>
<keyword id="KW-1185">Reference proteome</keyword>
<reference key="1">
    <citation type="journal article" date="2008" name="Proc. Natl. Acad. Sci. U.S.A.">
        <title>Niche adaptation and genome expansion in the chlorophyll d-producing cyanobacterium Acaryochloris marina.</title>
        <authorList>
            <person name="Swingley W.D."/>
            <person name="Chen M."/>
            <person name="Cheung P.C."/>
            <person name="Conrad A.L."/>
            <person name="Dejesa L.C."/>
            <person name="Hao J."/>
            <person name="Honchak B.M."/>
            <person name="Karbach L.E."/>
            <person name="Kurdoglu A."/>
            <person name="Lahiri S."/>
            <person name="Mastrian S.D."/>
            <person name="Miyashita H."/>
            <person name="Page L."/>
            <person name="Ramakrishna P."/>
            <person name="Satoh S."/>
            <person name="Sattley W.M."/>
            <person name="Shimada Y."/>
            <person name="Taylor H.L."/>
            <person name="Tomo T."/>
            <person name="Tsuchiya T."/>
            <person name="Wang Z.T."/>
            <person name="Raymond J."/>
            <person name="Mimuro M."/>
            <person name="Blankenship R.E."/>
            <person name="Touchman J.W."/>
        </authorList>
    </citation>
    <scope>NUCLEOTIDE SEQUENCE [LARGE SCALE GENOMIC DNA]</scope>
    <source>
        <strain>MBIC 11017</strain>
    </source>
</reference>
<protein>
    <recommendedName>
        <fullName evidence="1">Phosphoglucosamine mutase</fullName>
        <ecNumber evidence="1">5.4.2.10</ecNumber>
    </recommendedName>
</protein>
<proteinExistence type="inferred from homology"/>
<gene>
    <name evidence="1" type="primary">glmM</name>
    <name type="ordered locus">AM1_3435</name>
</gene>
<organism>
    <name type="scientific">Acaryochloris marina (strain MBIC 11017)</name>
    <dbReference type="NCBI Taxonomy" id="329726"/>
    <lineage>
        <taxon>Bacteria</taxon>
        <taxon>Bacillati</taxon>
        <taxon>Cyanobacteriota</taxon>
        <taxon>Cyanophyceae</taxon>
        <taxon>Acaryochloridales</taxon>
        <taxon>Acaryochloridaceae</taxon>
        <taxon>Acaryochloris</taxon>
    </lineage>
</organism>
<name>GLMM_ACAM1</name>